<reference key="1">
    <citation type="journal article" date="2004" name="PLoS Biol.">
        <title>Genomic insights into methanotrophy: the complete genome sequence of Methylococcus capsulatus (Bath).</title>
        <authorList>
            <person name="Ward N.L."/>
            <person name="Larsen O."/>
            <person name="Sakwa J."/>
            <person name="Bruseth L."/>
            <person name="Khouri H.M."/>
            <person name="Durkin A.S."/>
            <person name="Dimitrov G."/>
            <person name="Jiang L."/>
            <person name="Scanlan D."/>
            <person name="Kang K.H."/>
            <person name="Lewis M.R."/>
            <person name="Nelson K.E."/>
            <person name="Methe B.A."/>
            <person name="Wu M."/>
            <person name="Heidelberg J.F."/>
            <person name="Paulsen I.T."/>
            <person name="Fouts D.E."/>
            <person name="Ravel J."/>
            <person name="Tettelin H."/>
            <person name="Ren Q."/>
            <person name="Read T.D."/>
            <person name="DeBoy R.T."/>
            <person name="Seshadri R."/>
            <person name="Salzberg S.L."/>
            <person name="Jensen H.B."/>
            <person name="Birkeland N.K."/>
            <person name="Nelson W.C."/>
            <person name="Dodson R.J."/>
            <person name="Grindhaug S.H."/>
            <person name="Holt I.E."/>
            <person name="Eidhammer I."/>
            <person name="Jonasen I."/>
            <person name="Vanaken S."/>
            <person name="Utterback T.R."/>
            <person name="Feldblyum T.V."/>
            <person name="Fraser C.M."/>
            <person name="Lillehaug J.R."/>
            <person name="Eisen J.A."/>
        </authorList>
    </citation>
    <scope>NUCLEOTIDE SEQUENCE [LARGE SCALE GENOMIC DNA]</scope>
    <source>
        <strain>ATCC 33009 / NCIMB 11132 / Bath</strain>
    </source>
</reference>
<keyword id="KW-0028">Amino-acid biosynthesis</keyword>
<keyword id="KW-0032">Aminotransferase</keyword>
<keyword id="KW-0368">Histidine biosynthesis</keyword>
<keyword id="KW-0663">Pyridoxal phosphate</keyword>
<keyword id="KW-1185">Reference proteome</keyword>
<keyword id="KW-0808">Transferase</keyword>
<comment type="catalytic activity">
    <reaction evidence="1">
        <text>L-histidinol phosphate + 2-oxoglutarate = 3-(imidazol-4-yl)-2-oxopropyl phosphate + L-glutamate</text>
        <dbReference type="Rhea" id="RHEA:23744"/>
        <dbReference type="ChEBI" id="CHEBI:16810"/>
        <dbReference type="ChEBI" id="CHEBI:29985"/>
        <dbReference type="ChEBI" id="CHEBI:57766"/>
        <dbReference type="ChEBI" id="CHEBI:57980"/>
        <dbReference type="EC" id="2.6.1.9"/>
    </reaction>
</comment>
<comment type="cofactor">
    <cofactor evidence="1">
        <name>pyridoxal 5'-phosphate</name>
        <dbReference type="ChEBI" id="CHEBI:597326"/>
    </cofactor>
</comment>
<comment type="pathway">
    <text evidence="1">Amino-acid biosynthesis; L-histidine biosynthesis; L-histidine from 5-phospho-alpha-D-ribose 1-diphosphate: step 7/9.</text>
</comment>
<comment type="subunit">
    <text evidence="1">Homodimer.</text>
</comment>
<comment type="similarity">
    <text evidence="1">Belongs to the class-II pyridoxal-phosphate-dependent aminotransferase family. Histidinol-phosphate aminotransferase subfamily.</text>
</comment>
<gene>
    <name evidence="1" type="primary">hisC2</name>
    <name type="synonym">hisC-2</name>
    <name type="ordered locus">MCA1417</name>
</gene>
<proteinExistence type="inferred from homology"/>
<sequence length="371" mass="39708">MSITTLAVPGVRGLTPYQPGKPIGELEREFALKRIVKLASNENPLGASPKVLEVVRRILGGTHLYPDGSGFELKAALAEKLGVEPAQIVLGNGSNDVLDLVARAFLTAGRNAVYSEYAFAVYPIATQTAGATGKTAPAHDGSRGPRFGHDLETMLERVDPDTRVVFIANPNNPTGTLLGRGELYSFLAALPEHVIAVVDEAYFEYARRPDHPDALEWLGEFPGLIVTRTFSKAYGLAGLRVGYAVTGVEIADLLNRARQPFNVNTLGLAAAAAALEDTGFLEATVQANDAGRSQLEAGFRERGFDFIPSAGNFVSFDLGRPATPVFDALLREGVIVRPLGNYGLPNHLRVSVGTAEEIDLFFAALDRVLVP</sequence>
<dbReference type="EC" id="2.6.1.9" evidence="1"/>
<dbReference type="EMBL" id="AE017282">
    <property type="protein sequence ID" value="AAU92305.1"/>
    <property type="molecule type" value="Genomic_DNA"/>
</dbReference>
<dbReference type="RefSeq" id="WP_010960693.1">
    <property type="nucleotide sequence ID" value="NC_002977.6"/>
</dbReference>
<dbReference type="SMR" id="Q608S3"/>
<dbReference type="STRING" id="243233.MCA1417"/>
<dbReference type="GeneID" id="88223690"/>
<dbReference type="KEGG" id="mca:MCA1417"/>
<dbReference type="eggNOG" id="COG0079">
    <property type="taxonomic scope" value="Bacteria"/>
</dbReference>
<dbReference type="HOGENOM" id="CLU_017584_3_3_6"/>
<dbReference type="UniPathway" id="UPA00031">
    <property type="reaction ID" value="UER00012"/>
</dbReference>
<dbReference type="Proteomes" id="UP000006821">
    <property type="component" value="Chromosome"/>
</dbReference>
<dbReference type="GO" id="GO:0004400">
    <property type="term" value="F:histidinol-phosphate transaminase activity"/>
    <property type="evidence" value="ECO:0007669"/>
    <property type="project" value="UniProtKB-UniRule"/>
</dbReference>
<dbReference type="GO" id="GO:0030170">
    <property type="term" value="F:pyridoxal phosphate binding"/>
    <property type="evidence" value="ECO:0007669"/>
    <property type="project" value="InterPro"/>
</dbReference>
<dbReference type="GO" id="GO:0000105">
    <property type="term" value="P:L-histidine biosynthetic process"/>
    <property type="evidence" value="ECO:0007669"/>
    <property type="project" value="UniProtKB-UniRule"/>
</dbReference>
<dbReference type="CDD" id="cd00609">
    <property type="entry name" value="AAT_like"/>
    <property type="match status" value="1"/>
</dbReference>
<dbReference type="Gene3D" id="3.90.1150.10">
    <property type="entry name" value="Aspartate Aminotransferase, domain 1"/>
    <property type="match status" value="1"/>
</dbReference>
<dbReference type="Gene3D" id="3.40.640.10">
    <property type="entry name" value="Type I PLP-dependent aspartate aminotransferase-like (Major domain)"/>
    <property type="match status" value="1"/>
</dbReference>
<dbReference type="HAMAP" id="MF_01023">
    <property type="entry name" value="HisC_aminotrans_2"/>
    <property type="match status" value="1"/>
</dbReference>
<dbReference type="InterPro" id="IPR001917">
    <property type="entry name" value="Aminotrans_II_pyridoxalP_BS"/>
</dbReference>
<dbReference type="InterPro" id="IPR004839">
    <property type="entry name" value="Aminotransferase_I/II_large"/>
</dbReference>
<dbReference type="InterPro" id="IPR005861">
    <property type="entry name" value="HisP_aminotrans"/>
</dbReference>
<dbReference type="InterPro" id="IPR050106">
    <property type="entry name" value="HistidinolP_aminotransfase"/>
</dbReference>
<dbReference type="InterPro" id="IPR015424">
    <property type="entry name" value="PyrdxlP-dep_Trfase"/>
</dbReference>
<dbReference type="InterPro" id="IPR015421">
    <property type="entry name" value="PyrdxlP-dep_Trfase_major"/>
</dbReference>
<dbReference type="InterPro" id="IPR015422">
    <property type="entry name" value="PyrdxlP-dep_Trfase_small"/>
</dbReference>
<dbReference type="NCBIfam" id="TIGR01141">
    <property type="entry name" value="hisC"/>
    <property type="match status" value="1"/>
</dbReference>
<dbReference type="PANTHER" id="PTHR43643:SF3">
    <property type="entry name" value="HISTIDINOL-PHOSPHATE AMINOTRANSFERASE"/>
    <property type="match status" value="1"/>
</dbReference>
<dbReference type="PANTHER" id="PTHR43643">
    <property type="entry name" value="HISTIDINOL-PHOSPHATE AMINOTRANSFERASE 2"/>
    <property type="match status" value="1"/>
</dbReference>
<dbReference type="Pfam" id="PF00155">
    <property type="entry name" value="Aminotran_1_2"/>
    <property type="match status" value="1"/>
</dbReference>
<dbReference type="SUPFAM" id="SSF53383">
    <property type="entry name" value="PLP-dependent transferases"/>
    <property type="match status" value="1"/>
</dbReference>
<dbReference type="PROSITE" id="PS00599">
    <property type="entry name" value="AA_TRANSFER_CLASS_2"/>
    <property type="match status" value="1"/>
</dbReference>
<accession>Q608S3</accession>
<feature type="chain" id="PRO_0000153392" description="Histidinol-phosphate aminotransferase 2">
    <location>
        <begin position="1"/>
        <end position="371"/>
    </location>
</feature>
<feature type="modified residue" description="N6-(pyridoxal phosphate)lysine" evidence="1">
    <location>
        <position position="232"/>
    </location>
</feature>
<evidence type="ECO:0000255" key="1">
    <source>
        <dbReference type="HAMAP-Rule" id="MF_01023"/>
    </source>
</evidence>
<protein>
    <recommendedName>
        <fullName evidence="1">Histidinol-phosphate aminotransferase 2</fullName>
        <ecNumber evidence="1">2.6.1.9</ecNumber>
    </recommendedName>
    <alternativeName>
        <fullName evidence="1">Imidazole acetol-phosphate transaminase 2</fullName>
    </alternativeName>
</protein>
<name>HIS82_METCA</name>
<organism>
    <name type="scientific">Methylococcus capsulatus (strain ATCC 33009 / NCIMB 11132 / Bath)</name>
    <dbReference type="NCBI Taxonomy" id="243233"/>
    <lineage>
        <taxon>Bacteria</taxon>
        <taxon>Pseudomonadati</taxon>
        <taxon>Pseudomonadota</taxon>
        <taxon>Gammaproteobacteria</taxon>
        <taxon>Methylococcales</taxon>
        <taxon>Methylococcaceae</taxon>
        <taxon>Methylococcus</taxon>
    </lineage>
</organism>